<name>PYRG_PSEAE</name>
<gene>
    <name evidence="1" type="primary">pyrG</name>
    <name type="ordered locus">PA3637</name>
</gene>
<sequence length="542" mass="59618">MTRYIFVTGGVVSSLGKGIASASLAAILEARGLKITMLKLDPYINVDPGTMSPFQHGEVFVTQDGAETDLDLGHYERFVRTTMTQNNNFTTGRVYMDVLRKERRGDYLGATVQVIPHITDEIKRRIIKGAGDADVALVEIGGTVGDIESQPFLEAIRQLRVEIGAKRAMLMHLTLVPYIATAGETKTKPTQHSVKELRSIGLQPDVLVCRSDHPIDVSSRRKIALFTNVEERAVIALEDVDTIYRIPSVLHAQGLDDIVVERFGLECGQADLSEWDRVVDAKLNPEREVTIAMVGKYMELLDAYKSLIEAMTHAGIQSRTKVNLRYIDSEDIEQQGTSLLEGVDAILVPGGFGLRGVEGKISTVQYARENKIPYLGICLGMQVAVIEYARNVLGWSDANSTEFDKSSGHPVVGLITEWQDATGATEIRTEASDLGGTMRLGAQECQLQTGTLVHDCYAKDVIVERHRHRYEVNNNLLPQLEQAGLKISGRSGDGALVEVVEAPEHPWFVACQFHPEFTSTPRDGHPLFSGFVNAALKYSGKA</sequence>
<proteinExistence type="inferred from homology"/>
<organism>
    <name type="scientific">Pseudomonas aeruginosa (strain ATCC 15692 / DSM 22644 / CIP 104116 / JCM 14847 / LMG 12228 / 1C / PRS 101 / PAO1)</name>
    <dbReference type="NCBI Taxonomy" id="208964"/>
    <lineage>
        <taxon>Bacteria</taxon>
        <taxon>Pseudomonadati</taxon>
        <taxon>Pseudomonadota</taxon>
        <taxon>Gammaproteobacteria</taxon>
        <taxon>Pseudomonadales</taxon>
        <taxon>Pseudomonadaceae</taxon>
        <taxon>Pseudomonas</taxon>
    </lineage>
</organism>
<keyword id="KW-0067">ATP-binding</keyword>
<keyword id="KW-0315">Glutamine amidotransferase</keyword>
<keyword id="KW-0436">Ligase</keyword>
<keyword id="KW-0460">Magnesium</keyword>
<keyword id="KW-0479">Metal-binding</keyword>
<keyword id="KW-0547">Nucleotide-binding</keyword>
<keyword id="KW-0665">Pyrimidine biosynthesis</keyword>
<keyword id="KW-1185">Reference proteome</keyword>
<accession>Q9HXZ4</accession>
<reference key="1">
    <citation type="journal article" date="2000" name="Nature">
        <title>Complete genome sequence of Pseudomonas aeruginosa PAO1, an opportunistic pathogen.</title>
        <authorList>
            <person name="Stover C.K."/>
            <person name="Pham X.-Q.T."/>
            <person name="Erwin A.L."/>
            <person name="Mizoguchi S.D."/>
            <person name="Warrener P."/>
            <person name="Hickey M.J."/>
            <person name="Brinkman F.S.L."/>
            <person name="Hufnagle W.O."/>
            <person name="Kowalik D.J."/>
            <person name="Lagrou M."/>
            <person name="Garber R.L."/>
            <person name="Goltry L."/>
            <person name="Tolentino E."/>
            <person name="Westbrock-Wadman S."/>
            <person name="Yuan Y."/>
            <person name="Brody L.L."/>
            <person name="Coulter S.N."/>
            <person name="Folger K.R."/>
            <person name="Kas A."/>
            <person name="Larbig K."/>
            <person name="Lim R.M."/>
            <person name="Smith K.A."/>
            <person name="Spencer D.H."/>
            <person name="Wong G.K.-S."/>
            <person name="Wu Z."/>
            <person name="Paulsen I.T."/>
            <person name="Reizer J."/>
            <person name="Saier M.H. Jr."/>
            <person name="Hancock R.E.W."/>
            <person name="Lory S."/>
            <person name="Olson M.V."/>
        </authorList>
    </citation>
    <scope>NUCLEOTIDE SEQUENCE [LARGE SCALE GENOMIC DNA]</scope>
    <source>
        <strain>ATCC 15692 / DSM 22644 / CIP 104116 / JCM 14847 / LMG 12228 / 1C / PRS 101 / PAO1</strain>
    </source>
</reference>
<dbReference type="EC" id="6.3.4.2" evidence="1"/>
<dbReference type="EMBL" id="AE004091">
    <property type="protein sequence ID" value="AAG07025.1"/>
    <property type="molecule type" value="Genomic_DNA"/>
</dbReference>
<dbReference type="PIR" id="B83192">
    <property type="entry name" value="B83192"/>
</dbReference>
<dbReference type="RefSeq" id="NP_252327.1">
    <property type="nucleotide sequence ID" value="NC_002516.2"/>
</dbReference>
<dbReference type="RefSeq" id="WP_003092366.1">
    <property type="nucleotide sequence ID" value="NZ_QZGE01000001.1"/>
</dbReference>
<dbReference type="SMR" id="Q9HXZ4"/>
<dbReference type="FunCoup" id="Q9HXZ4">
    <property type="interactions" value="608"/>
</dbReference>
<dbReference type="STRING" id="208964.PA3637"/>
<dbReference type="MEROPS" id="C26.964"/>
<dbReference type="PaxDb" id="208964-PA3637"/>
<dbReference type="GeneID" id="880546"/>
<dbReference type="KEGG" id="pae:PA3637"/>
<dbReference type="PATRIC" id="fig|208964.12.peg.3806"/>
<dbReference type="PseudoCAP" id="PA3637"/>
<dbReference type="HOGENOM" id="CLU_011675_5_0_6"/>
<dbReference type="InParanoid" id="Q9HXZ4"/>
<dbReference type="OrthoDB" id="9801107at2"/>
<dbReference type="PhylomeDB" id="Q9HXZ4"/>
<dbReference type="BioCyc" id="PAER208964:G1FZ6-3707-MONOMER"/>
<dbReference type="UniPathway" id="UPA00159">
    <property type="reaction ID" value="UER00277"/>
</dbReference>
<dbReference type="Proteomes" id="UP000002438">
    <property type="component" value="Chromosome"/>
</dbReference>
<dbReference type="GO" id="GO:0005829">
    <property type="term" value="C:cytosol"/>
    <property type="evidence" value="ECO:0000318"/>
    <property type="project" value="GO_Central"/>
</dbReference>
<dbReference type="GO" id="GO:0005524">
    <property type="term" value="F:ATP binding"/>
    <property type="evidence" value="ECO:0007669"/>
    <property type="project" value="UniProtKB-KW"/>
</dbReference>
<dbReference type="GO" id="GO:0003883">
    <property type="term" value="F:CTP synthase activity"/>
    <property type="evidence" value="ECO:0000318"/>
    <property type="project" value="GO_Central"/>
</dbReference>
<dbReference type="GO" id="GO:0004359">
    <property type="term" value="F:glutaminase activity"/>
    <property type="evidence" value="ECO:0007669"/>
    <property type="project" value="RHEA"/>
</dbReference>
<dbReference type="GO" id="GO:0042802">
    <property type="term" value="F:identical protein binding"/>
    <property type="evidence" value="ECO:0000318"/>
    <property type="project" value="GO_Central"/>
</dbReference>
<dbReference type="GO" id="GO:0046872">
    <property type="term" value="F:metal ion binding"/>
    <property type="evidence" value="ECO:0007669"/>
    <property type="project" value="UniProtKB-KW"/>
</dbReference>
<dbReference type="GO" id="GO:0044210">
    <property type="term" value="P:'de novo' CTP biosynthetic process"/>
    <property type="evidence" value="ECO:0007669"/>
    <property type="project" value="UniProtKB-UniRule"/>
</dbReference>
<dbReference type="GO" id="GO:0006241">
    <property type="term" value="P:CTP biosynthetic process"/>
    <property type="evidence" value="ECO:0000318"/>
    <property type="project" value="GO_Central"/>
</dbReference>
<dbReference type="GO" id="GO:0019856">
    <property type="term" value="P:pyrimidine nucleobase biosynthetic process"/>
    <property type="evidence" value="ECO:0000318"/>
    <property type="project" value="GO_Central"/>
</dbReference>
<dbReference type="CDD" id="cd03113">
    <property type="entry name" value="CTPS_N"/>
    <property type="match status" value="1"/>
</dbReference>
<dbReference type="CDD" id="cd01746">
    <property type="entry name" value="GATase1_CTP_Synthase"/>
    <property type="match status" value="1"/>
</dbReference>
<dbReference type="FunFam" id="3.40.50.300:FF:000009">
    <property type="entry name" value="CTP synthase"/>
    <property type="match status" value="1"/>
</dbReference>
<dbReference type="FunFam" id="3.40.50.880:FF:000002">
    <property type="entry name" value="CTP synthase"/>
    <property type="match status" value="1"/>
</dbReference>
<dbReference type="Gene3D" id="3.40.50.880">
    <property type="match status" value="1"/>
</dbReference>
<dbReference type="Gene3D" id="3.40.50.300">
    <property type="entry name" value="P-loop containing nucleotide triphosphate hydrolases"/>
    <property type="match status" value="1"/>
</dbReference>
<dbReference type="HAMAP" id="MF_01227">
    <property type="entry name" value="PyrG"/>
    <property type="match status" value="1"/>
</dbReference>
<dbReference type="InterPro" id="IPR029062">
    <property type="entry name" value="Class_I_gatase-like"/>
</dbReference>
<dbReference type="InterPro" id="IPR004468">
    <property type="entry name" value="CTP_synthase"/>
</dbReference>
<dbReference type="InterPro" id="IPR017456">
    <property type="entry name" value="CTP_synthase_N"/>
</dbReference>
<dbReference type="InterPro" id="IPR017926">
    <property type="entry name" value="GATASE"/>
</dbReference>
<dbReference type="InterPro" id="IPR033828">
    <property type="entry name" value="GATase1_CTP_Synthase"/>
</dbReference>
<dbReference type="InterPro" id="IPR027417">
    <property type="entry name" value="P-loop_NTPase"/>
</dbReference>
<dbReference type="NCBIfam" id="NF003792">
    <property type="entry name" value="PRK05380.1"/>
    <property type="match status" value="1"/>
</dbReference>
<dbReference type="NCBIfam" id="TIGR00337">
    <property type="entry name" value="PyrG"/>
    <property type="match status" value="1"/>
</dbReference>
<dbReference type="PANTHER" id="PTHR11550">
    <property type="entry name" value="CTP SYNTHASE"/>
    <property type="match status" value="1"/>
</dbReference>
<dbReference type="PANTHER" id="PTHR11550:SF0">
    <property type="entry name" value="CTP SYNTHASE-RELATED"/>
    <property type="match status" value="1"/>
</dbReference>
<dbReference type="Pfam" id="PF06418">
    <property type="entry name" value="CTP_synth_N"/>
    <property type="match status" value="1"/>
</dbReference>
<dbReference type="Pfam" id="PF00117">
    <property type="entry name" value="GATase"/>
    <property type="match status" value="1"/>
</dbReference>
<dbReference type="SUPFAM" id="SSF52317">
    <property type="entry name" value="Class I glutamine amidotransferase-like"/>
    <property type="match status" value="1"/>
</dbReference>
<dbReference type="SUPFAM" id="SSF52540">
    <property type="entry name" value="P-loop containing nucleoside triphosphate hydrolases"/>
    <property type="match status" value="1"/>
</dbReference>
<dbReference type="PROSITE" id="PS51273">
    <property type="entry name" value="GATASE_TYPE_1"/>
    <property type="match status" value="1"/>
</dbReference>
<protein>
    <recommendedName>
        <fullName evidence="1">CTP synthase</fullName>
        <ecNumber evidence="1">6.3.4.2</ecNumber>
    </recommendedName>
    <alternativeName>
        <fullName evidence="1">Cytidine 5'-triphosphate synthase</fullName>
    </alternativeName>
    <alternativeName>
        <fullName evidence="1">Cytidine triphosphate synthetase</fullName>
        <shortName evidence="1">CTP synthetase</shortName>
        <shortName evidence="1">CTPS</shortName>
    </alternativeName>
    <alternativeName>
        <fullName evidence="1">UTP--ammonia ligase</fullName>
    </alternativeName>
</protein>
<comment type="function">
    <text evidence="1">Catalyzes the ATP-dependent amination of UTP to CTP with either L-glutamine or ammonia as the source of nitrogen. Regulates intracellular CTP levels through interactions with the four ribonucleotide triphosphates.</text>
</comment>
<comment type="catalytic activity">
    <reaction evidence="1">
        <text>UTP + L-glutamine + ATP + H2O = CTP + L-glutamate + ADP + phosphate + 2 H(+)</text>
        <dbReference type="Rhea" id="RHEA:26426"/>
        <dbReference type="ChEBI" id="CHEBI:15377"/>
        <dbReference type="ChEBI" id="CHEBI:15378"/>
        <dbReference type="ChEBI" id="CHEBI:29985"/>
        <dbReference type="ChEBI" id="CHEBI:30616"/>
        <dbReference type="ChEBI" id="CHEBI:37563"/>
        <dbReference type="ChEBI" id="CHEBI:43474"/>
        <dbReference type="ChEBI" id="CHEBI:46398"/>
        <dbReference type="ChEBI" id="CHEBI:58359"/>
        <dbReference type="ChEBI" id="CHEBI:456216"/>
        <dbReference type="EC" id="6.3.4.2"/>
    </reaction>
</comment>
<comment type="catalytic activity">
    <reaction evidence="1">
        <text>L-glutamine + H2O = L-glutamate + NH4(+)</text>
        <dbReference type="Rhea" id="RHEA:15889"/>
        <dbReference type="ChEBI" id="CHEBI:15377"/>
        <dbReference type="ChEBI" id="CHEBI:28938"/>
        <dbReference type="ChEBI" id="CHEBI:29985"/>
        <dbReference type="ChEBI" id="CHEBI:58359"/>
    </reaction>
</comment>
<comment type="catalytic activity">
    <reaction evidence="1">
        <text>UTP + NH4(+) + ATP = CTP + ADP + phosphate + 2 H(+)</text>
        <dbReference type="Rhea" id="RHEA:16597"/>
        <dbReference type="ChEBI" id="CHEBI:15378"/>
        <dbReference type="ChEBI" id="CHEBI:28938"/>
        <dbReference type="ChEBI" id="CHEBI:30616"/>
        <dbReference type="ChEBI" id="CHEBI:37563"/>
        <dbReference type="ChEBI" id="CHEBI:43474"/>
        <dbReference type="ChEBI" id="CHEBI:46398"/>
        <dbReference type="ChEBI" id="CHEBI:456216"/>
    </reaction>
</comment>
<comment type="activity regulation">
    <text evidence="1">Allosterically activated by GTP, when glutamine is the substrate; GTP has no effect on the reaction when ammonia is the substrate. The allosteric effector GTP functions by stabilizing the protein conformation that binds the tetrahedral intermediate(s) formed during glutamine hydrolysis. Inhibited by the product CTP, via allosteric rather than competitive inhibition.</text>
</comment>
<comment type="pathway">
    <text evidence="1">Pyrimidine metabolism; CTP biosynthesis via de novo pathway; CTP from UDP: step 2/2.</text>
</comment>
<comment type="subunit">
    <text evidence="1">Homotetramer.</text>
</comment>
<comment type="miscellaneous">
    <text evidence="1">CTPSs have evolved a hybrid strategy for distinguishing between UTP and CTP. The overlapping regions of the product feedback inhibitory and substrate sites recognize a common feature in both compounds, the triphosphate moiety. To differentiate isosteric substrate and product pyrimidine rings, an additional pocket far from the expected kinase/ligase catalytic site, specifically recognizes the cytosine and ribose portions of the product inhibitor.</text>
</comment>
<comment type="similarity">
    <text evidence="1">Belongs to the CTP synthase family.</text>
</comment>
<evidence type="ECO:0000255" key="1">
    <source>
        <dbReference type="HAMAP-Rule" id="MF_01227"/>
    </source>
</evidence>
<feature type="chain" id="PRO_0000138210" description="CTP synthase">
    <location>
        <begin position="1"/>
        <end position="542"/>
    </location>
</feature>
<feature type="domain" description="Glutamine amidotransferase type-1" evidence="1">
    <location>
        <begin position="290"/>
        <end position="541"/>
    </location>
</feature>
<feature type="region of interest" description="Amidoligase domain" evidence="1">
    <location>
        <begin position="1"/>
        <end position="265"/>
    </location>
</feature>
<feature type="active site" description="Nucleophile; for glutamine hydrolysis" evidence="1">
    <location>
        <position position="378"/>
    </location>
</feature>
<feature type="active site" evidence="1">
    <location>
        <position position="514"/>
    </location>
</feature>
<feature type="active site" evidence="1">
    <location>
        <position position="516"/>
    </location>
</feature>
<feature type="binding site" evidence="1">
    <location>
        <position position="13"/>
    </location>
    <ligand>
        <name>CTP</name>
        <dbReference type="ChEBI" id="CHEBI:37563"/>
        <note>allosteric inhibitor</note>
    </ligand>
</feature>
<feature type="binding site" evidence="1">
    <location>
        <position position="13"/>
    </location>
    <ligand>
        <name>UTP</name>
        <dbReference type="ChEBI" id="CHEBI:46398"/>
    </ligand>
</feature>
<feature type="binding site" evidence="1">
    <location>
        <begin position="14"/>
        <end position="19"/>
    </location>
    <ligand>
        <name>ATP</name>
        <dbReference type="ChEBI" id="CHEBI:30616"/>
    </ligand>
</feature>
<feature type="binding site" evidence="1">
    <location>
        <position position="71"/>
    </location>
    <ligand>
        <name>ATP</name>
        <dbReference type="ChEBI" id="CHEBI:30616"/>
    </ligand>
</feature>
<feature type="binding site" evidence="1">
    <location>
        <position position="71"/>
    </location>
    <ligand>
        <name>Mg(2+)</name>
        <dbReference type="ChEBI" id="CHEBI:18420"/>
    </ligand>
</feature>
<feature type="binding site" evidence="1">
    <location>
        <position position="139"/>
    </location>
    <ligand>
        <name>Mg(2+)</name>
        <dbReference type="ChEBI" id="CHEBI:18420"/>
    </ligand>
</feature>
<feature type="binding site" evidence="1">
    <location>
        <begin position="146"/>
        <end position="148"/>
    </location>
    <ligand>
        <name>CTP</name>
        <dbReference type="ChEBI" id="CHEBI:37563"/>
        <note>allosteric inhibitor</note>
    </ligand>
</feature>
<feature type="binding site" evidence="1">
    <location>
        <begin position="186"/>
        <end position="191"/>
    </location>
    <ligand>
        <name>CTP</name>
        <dbReference type="ChEBI" id="CHEBI:37563"/>
        <note>allosteric inhibitor</note>
    </ligand>
</feature>
<feature type="binding site" evidence="1">
    <location>
        <begin position="186"/>
        <end position="191"/>
    </location>
    <ligand>
        <name>UTP</name>
        <dbReference type="ChEBI" id="CHEBI:46398"/>
    </ligand>
</feature>
<feature type="binding site" evidence="1">
    <location>
        <position position="222"/>
    </location>
    <ligand>
        <name>CTP</name>
        <dbReference type="ChEBI" id="CHEBI:37563"/>
        <note>allosteric inhibitor</note>
    </ligand>
</feature>
<feature type="binding site" evidence="1">
    <location>
        <position position="222"/>
    </location>
    <ligand>
        <name>UTP</name>
        <dbReference type="ChEBI" id="CHEBI:46398"/>
    </ligand>
</feature>
<feature type="binding site" evidence="1">
    <location>
        <position position="351"/>
    </location>
    <ligand>
        <name>L-glutamine</name>
        <dbReference type="ChEBI" id="CHEBI:58359"/>
    </ligand>
</feature>
<feature type="binding site" evidence="1">
    <location>
        <begin position="379"/>
        <end position="382"/>
    </location>
    <ligand>
        <name>L-glutamine</name>
        <dbReference type="ChEBI" id="CHEBI:58359"/>
    </ligand>
</feature>
<feature type="binding site" evidence="1">
    <location>
        <position position="402"/>
    </location>
    <ligand>
        <name>L-glutamine</name>
        <dbReference type="ChEBI" id="CHEBI:58359"/>
    </ligand>
</feature>
<feature type="binding site" evidence="1">
    <location>
        <position position="469"/>
    </location>
    <ligand>
        <name>L-glutamine</name>
        <dbReference type="ChEBI" id="CHEBI:58359"/>
    </ligand>
</feature>